<name>FB131_ARATH</name>
<accession>Q3E7D1</accession>
<keyword id="KW-1185">Reference proteome</keyword>
<evidence type="ECO:0000305" key="1"/>
<sequence>MQRERSMKRKRRRRGIKDMCNRHDCEIPPDLMIEILIRLPTKSFMRFKCVSKQWSPLISGRYFCNRLFTCVTRQQQQQPRLYMCLVAKDKQCVLLSSTSPDNTCFVLVDQDLSIPGYFFASVPGLLCFQFGTKACIYNPSTKQLLTLPSVKSDITAQQGQLKTTQYYIGRDPVNDQYKLVCTILIYSKLFANMSSEHWVFTLELGGSWKKVVPLGNYHPHAPATAGRSIDGVVHYLAWVDLYKCAVVSFNIRSEEVTTFLLPRKIWDVPVPALMMKADLIEYDGKLAIFSHSYLKDEGLVELWVLKDAAGKKKWSNMILVLQPCQRHLVHGIDLIVKGTTQDGKVILSPLEMRSQFYILCYDVQNNDLRKVEITGVPRLWLHKECNFDLKFMDESESFIYLEI</sequence>
<reference key="1">
    <citation type="journal article" date="1999" name="Nature">
        <title>Sequence and analysis of chromosome 2 of the plant Arabidopsis thaliana.</title>
        <authorList>
            <person name="Lin X."/>
            <person name="Kaul S."/>
            <person name="Rounsley S.D."/>
            <person name="Shea T.P."/>
            <person name="Benito M.-I."/>
            <person name="Town C.D."/>
            <person name="Fujii C.Y."/>
            <person name="Mason T.M."/>
            <person name="Bowman C.L."/>
            <person name="Barnstead M.E."/>
            <person name="Feldblyum T.V."/>
            <person name="Buell C.R."/>
            <person name="Ketchum K.A."/>
            <person name="Lee J.J."/>
            <person name="Ronning C.M."/>
            <person name="Koo H.L."/>
            <person name="Moffat K.S."/>
            <person name="Cronin L.A."/>
            <person name="Shen M."/>
            <person name="Pai G."/>
            <person name="Van Aken S."/>
            <person name="Umayam L."/>
            <person name="Tallon L.J."/>
            <person name="Gill J.E."/>
            <person name="Adams M.D."/>
            <person name="Carrera A.J."/>
            <person name="Creasy T.H."/>
            <person name="Goodman H.M."/>
            <person name="Somerville C.R."/>
            <person name="Copenhaver G.P."/>
            <person name="Preuss D."/>
            <person name="Nierman W.C."/>
            <person name="White O."/>
            <person name="Eisen J.A."/>
            <person name="Salzberg S.L."/>
            <person name="Fraser C.M."/>
            <person name="Venter J.C."/>
        </authorList>
    </citation>
    <scope>NUCLEOTIDE SEQUENCE [LARGE SCALE GENOMIC DNA]</scope>
    <source>
        <strain>cv. Columbia</strain>
    </source>
</reference>
<reference key="2">
    <citation type="journal article" date="2017" name="Plant J.">
        <title>Araport11: a complete reannotation of the Arabidopsis thaliana reference genome.</title>
        <authorList>
            <person name="Cheng C.Y."/>
            <person name="Krishnakumar V."/>
            <person name="Chan A.P."/>
            <person name="Thibaud-Nissen F."/>
            <person name="Schobel S."/>
            <person name="Town C.D."/>
        </authorList>
    </citation>
    <scope>GENOME REANNOTATION</scope>
    <source>
        <strain>cv. Columbia</strain>
    </source>
</reference>
<reference key="3">
    <citation type="journal article" date="2005" name="Plant Physiol.">
        <title>Analysis of the cDNAs of hypothetical genes on Arabidopsis chromosome 2 reveals numerous transcript variants.</title>
        <authorList>
            <person name="Xiao Y.-L."/>
            <person name="Smith S.R."/>
            <person name="Ishmael N."/>
            <person name="Redman J.C."/>
            <person name="Kumar N."/>
            <person name="Monaghan E.L."/>
            <person name="Ayele M."/>
            <person name="Haas B.J."/>
            <person name="Wu H.C."/>
            <person name="Town C.D."/>
        </authorList>
    </citation>
    <scope>NUCLEOTIDE SEQUENCE [LARGE SCALE MRNA] OF 1-133</scope>
    <source>
        <strain>cv. Columbia</strain>
    </source>
</reference>
<feature type="chain" id="PRO_0000283402" description="F-box protein At2g40925">
    <location>
        <begin position="1"/>
        <end position="403"/>
    </location>
</feature>
<feature type="domain" description="F-box">
    <location>
        <begin position="21"/>
        <end position="71"/>
    </location>
</feature>
<feature type="sequence conflict" description="In Ref. 3; AY500295." evidence="1" ref="3">
    <original>L</original>
    <variation>H</variation>
    <location>
        <position position="36"/>
    </location>
</feature>
<feature type="sequence conflict" description="In Ref. 3; AY500295." evidence="1" ref="3">
    <original>K</original>
    <variation>N</variation>
    <location>
        <position position="42"/>
    </location>
</feature>
<feature type="sequence conflict" description="In Ref. 3; AY500295." evidence="1" ref="3">
    <original>R</original>
    <variation>Q</variation>
    <location>
        <position position="73"/>
    </location>
</feature>
<organism>
    <name type="scientific">Arabidopsis thaliana</name>
    <name type="common">Mouse-ear cress</name>
    <dbReference type="NCBI Taxonomy" id="3702"/>
    <lineage>
        <taxon>Eukaryota</taxon>
        <taxon>Viridiplantae</taxon>
        <taxon>Streptophyta</taxon>
        <taxon>Embryophyta</taxon>
        <taxon>Tracheophyta</taxon>
        <taxon>Spermatophyta</taxon>
        <taxon>Magnoliopsida</taxon>
        <taxon>eudicotyledons</taxon>
        <taxon>Gunneridae</taxon>
        <taxon>Pentapetalae</taxon>
        <taxon>rosids</taxon>
        <taxon>malvids</taxon>
        <taxon>Brassicales</taxon>
        <taxon>Brassicaceae</taxon>
        <taxon>Camelineae</taxon>
        <taxon>Arabidopsis</taxon>
    </lineage>
</organism>
<proteinExistence type="evidence at transcript level"/>
<protein>
    <recommendedName>
        <fullName>F-box protein At2g40925</fullName>
    </recommendedName>
</protein>
<dbReference type="EMBL" id="AC002409">
    <property type="status" value="NOT_ANNOTATED_CDS"/>
    <property type="molecule type" value="Genomic_DNA"/>
</dbReference>
<dbReference type="EMBL" id="CP002685">
    <property type="protein sequence ID" value="AEC09899.1"/>
    <property type="molecule type" value="Genomic_DNA"/>
</dbReference>
<dbReference type="EMBL" id="AY500295">
    <property type="status" value="NOT_ANNOTATED_CDS"/>
    <property type="molecule type" value="mRNA"/>
</dbReference>
<dbReference type="RefSeq" id="NP_850338.1">
    <property type="nucleotide sequence ID" value="NM_180007.2"/>
</dbReference>
<dbReference type="SMR" id="Q3E7D1"/>
<dbReference type="FunCoup" id="Q3E7D1">
    <property type="interactions" value="2"/>
</dbReference>
<dbReference type="PaxDb" id="3702-AT2G40925.1"/>
<dbReference type="EnsemblPlants" id="AT2G40925.1">
    <property type="protein sequence ID" value="AT2G40925.1"/>
    <property type="gene ID" value="AT2G40925"/>
</dbReference>
<dbReference type="GeneID" id="818690"/>
<dbReference type="Gramene" id="AT2G40925.1">
    <property type="protein sequence ID" value="AT2G40925.1"/>
    <property type="gene ID" value="AT2G40925"/>
</dbReference>
<dbReference type="KEGG" id="ath:AT2G40925"/>
<dbReference type="Araport" id="AT2G40925"/>
<dbReference type="TAIR" id="AT2G40925"/>
<dbReference type="eggNOG" id="ENOG502SPBF">
    <property type="taxonomic scope" value="Eukaryota"/>
</dbReference>
<dbReference type="HOGENOM" id="CLU_027176_8_2_1"/>
<dbReference type="InParanoid" id="Q3E7D1"/>
<dbReference type="OMA" id="HYLAWVD"/>
<dbReference type="OrthoDB" id="1084782at2759"/>
<dbReference type="PhylomeDB" id="Q3E7D1"/>
<dbReference type="PRO" id="PR:Q3E7D1"/>
<dbReference type="Proteomes" id="UP000006548">
    <property type="component" value="Chromosome 2"/>
</dbReference>
<dbReference type="ExpressionAtlas" id="Q3E7D1">
    <property type="expression patterns" value="baseline and differential"/>
</dbReference>
<dbReference type="GO" id="GO:0009507">
    <property type="term" value="C:chloroplast"/>
    <property type="evidence" value="ECO:0007005"/>
    <property type="project" value="TAIR"/>
</dbReference>
<dbReference type="CDD" id="cd22157">
    <property type="entry name" value="F-box_AtFBW1-like"/>
    <property type="match status" value="1"/>
</dbReference>
<dbReference type="Gene3D" id="1.20.1280.50">
    <property type="match status" value="1"/>
</dbReference>
<dbReference type="InterPro" id="IPR013187">
    <property type="entry name" value="F-box-assoc_dom_typ3"/>
</dbReference>
<dbReference type="InterPro" id="IPR017451">
    <property type="entry name" value="F-box-assoc_interact_dom"/>
</dbReference>
<dbReference type="InterPro" id="IPR036047">
    <property type="entry name" value="F-box-like_dom_sf"/>
</dbReference>
<dbReference type="InterPro" id="IPR001810">
    <property type="entry name" value="F-box_dom"/>
</dbReference>
<dbReference type="NCBIfam" id="TIGR01640">
    <property type="entry name" value="F_box_assoc_1"/>
    <property type="match status" value="1"/>
</dbReference>
<dbReference type="PANTHER" id="PTHR31111">
    <property type="entry name" value="BNAA05G37150D PROTEIN-RELATED"/>
    <property type="match status" value="1"/>
</dbReference>
<dbReference type="PANTHER" id="PTHR31111:SF14">
    <property type="entry name" value="F-BOX ASSOCIATED DOMAIN-CONTAINING PROTEIN"/>
    <property type="match status" value="1"/>
</dbReference>
<dbReference type="Pfam" id="PF00646">
    <property type="entry name" value="F-box"/>
    <property type="match status" value="1"/>
</dbReference>
<dbReference type="Pfam" id="PF08268">
    <property type="entry name" value="FBA_3"/>
    <property type="match status" value="1"/>
</dbReference>
<dbReference type="SMART" id="SM00256">
    <property type="entry name" value="FBOX"/>
    <property type="match status" value="1"/>
</dbReference>
<dbReference type="SUPFAM" id="SSF81383">
    <property type="entry name" value="F-box domain"/>
    <property type="match status" value="1"/>
</dbReference>
<gene>
    <name type="ordered locus">At2g40925</name>
    <name type="ORF">T20B5</name>
</gene>